<gene>
    <name type="primary">EMB</name>
</gene>
<reference key="1">
    <citation type="journal article" date="2004" name="Nat. Genet.">
        <title>Complete sequencing and characterization of 21,243 full-length human cDNAs.</title>
        <authorList>
            <person name="Ota T."/>
            <person name="Suzuki Y."/>
            <person name="Nishikawa T."/>
            <person name="Otsuki T."/>
            <person name="Sugiyama T."/>
            <person name="Irie R."/>
            <person name="Wakamatsu A."/>
            <person name="Hayashi K."/>
            <person name="Sato H."/>
            <person name="Nagai K."/>
            <person name="Kimura K."/>
            <person name="Makita H."/>
            <person name="Sekine M."/>
            <person name="Obayashi M."/>
            <person name="Nishi T."/>
            <person name="Shibahara T."/>
            <person name="Tanaka T."/>
            <person name="Ishii S."/>
            <person name="Yamamoto J."/>
            <person name="Saito K."/>
            <person name="Kawai Y."/>
            <person name="Isono Y."/>
            <person name="Nakamura Y."/>
            <person name="Nagahari K."/>
            <person name="Murakami K."/>
            <person name="Yasuda T."/>
            <person name="Iwayanagi T."/>
            <person name="Wagatsuma M."/>
            <person name="Shiratori A."/>
            <person name="Sudo H."/>
            <person name="Hosoiri T."/>
            <person name="Kaku Y."/>
            <person name="Kodaira H."/>
            <person name="Kondo H."/>
            <person name="Sugawara M."/>
            <person name="Takahashi M."/>
            <person name="Kanda K."/>
            <person name="Yokoi T."/>
            <person name="Furuya T."/>
            <person name="Kikkawa E."/>
            <person name="Omura Y."/>
            <person name="Abe K."/>
            <person name="Kamihara K."/>
            <person name="Katsuta N."/>
            <person name="Sato K."/>
            <person name="Tanikawa M."/>
            <person name="Yamazaki M."/>
            <person name="Ninomiya K."/>
            <person name="Ishibashi T."/>
            <person name="Yamashita H."/>
            <person name="Murakawa K."/>
            <person name="Fujimori K."/>
            <person name="Tanai H."/>
            <person name="Kimata M."/>
            <person name="Watanabe M."/>
            <person name="Hiraoka S."/>
            <person name="Chiba Y."/>
            <person name="Ishida S."/>
            <person name="Ono Y."/>
            <person name="Takiguchi S."/>
            <person name="Watanabe S."/>
            <person name="Yosida M."/>
            <person name="Hotuta T."/>
            <person name="Kusano J."/>
            <person name="Kanehori K."/>
            <person name="Takahashi-Fujii A."/>
            <person name="Hara H."/>
            <person name="Tanase T.-O."/>
            <person name="Nomura Y."/>
            <person name="Togiya S."/>
            <person name="Komai F."/>
            <person name="Hara R."/>
            <person name="Takeuchi K."/>
            <person name="Arita M."/>
            <person name="Imose N."/>
            <person name="Musashino K."/>
            <person name="Yuuki H."/>
            <person name="Oshima A."/>
            <person name="Sasaki N."/>
            <person name="Aotsuka S."/>
            <person name="Yoshikawa Y."/>
            <person name="Matsunawa H."/>
            <person name="Ichihara T."/>
            <person name="Shiohata N."/>
            <person name="Sano S."/>
            <person name="Moriya S."/>
            <person name="Momiyama H."/>
            <person name="Satoh N."/>
            <person name="Takami S."/>
            <person name="Terashima Y."/>
            <person name="Suzuki O."/>
            <person name="Nakagawa S."/>
            <person name="Senoh A."/>
            <person name="Mizoguchi H."/>
            <person name="Goto Y."/>
            <person name="Shimizu F."/>
            <person name="Wakebe H."/>
            <person name="Hishigaki H."/>
            <person name="Watanabe T."/>
            <person name="Sugiyama A."/>
            <person name="Takemoto M."/>
            <person name="Kawakami B."/>
            <person name="Yamazaki M."/>
            <person name="Watanabe K."/>
            <person name="Kumagai A."/>
            <person name="Itakura S."/>
            <person name="Fukuzumi Y."/>
            <person name="Fujimori Y."/>
            <person name="Komiyama M."/>
            <person name="Tashiro H."/>
            <person name="Tanigami A."/>
            <person name="Fujiwara T."/>
            <person name="Ono T."/>
            <person name="Yamada K."/>
            <person name="Fujii Y."/>
            <person name="Ozaki K."/>
            <person name="Hirao M."/>
            <person name="Ohmori Y."/>
            <person name="Kawabata A."/>
            <person name="Hikiji T."/>
            <person name="Kobatake N."/>
            <person name="Inagaki H."/>
            <person name="Ikema Y."/>
            <person name="Okamoto S."/>
            <person name="Okitani R."/>
            <person name="Kawakami T."/>
            <person name="Noguchi S."/>
            <person name="Itoh T."/>
            <person name="Shigeta K."/>
            <person name="Senba T."/>
            <person name="Matsumura K."/>
            <person name="Nakajima Y."/>
            <person name="Mizuno T."/>
            <person name="Morinaga M."/>
            <person name="Sasaki M."/>
            <person name="Togashi T."/>
            <person name="Oyama M."/>
            <person name="Hata H."/>
            <person name="Watanabe M."/>
            <person name="Komatsu T."/>
            <person name="Mizushima-Sugano J."/>
            <person name="Satoh T."/>
            <person name="Shirai Y."/>
            <person name="Takahashi Y."/>
            <person name="Nakagawa K."/>
            <person name="Okumura K."/>
            <person name="Nagase T."/>
            <person name="Nomura N."/>
            <person name="Kikuchi H."/>
            <person name="Masuho Y."/>
            <person name="Yamashita R."/>
            <person name="Nakai K."/>
            <person name="Yada T."/>
            <person name="Nakamura Y."/>
            <person name="Ohara O."/>
            <person name="Isogai T."/>
            <person name="Sugano S."/>
        </authorList>
    </citation>
    <scope>NUCLEOTIDE SEQUENCE [LARGE SCALE MRNA] (ISOFORMS 1 AND 2)</scope>
    <source>
        <tissue>Small intestine</tissue>
        <tissue>Trachea</tissue>
    </source>
</reference>
<reference key="2">
    <citation type="journal article" date="2004" name="Nature">
        <title>The DNA sequence and comparative analysis of human chromosome 5.</title>
        <authorList>
            <person name="Schmutz J."/>
            <person name="Martin J."/>
            <person name="Terry A."/>
            <person name="Couronne O."/>
            <person name="Grimwood J."/>
            <person name="Lowry S."/>
            <person name="Gordon L.A."/>
            <person name="Scott D."/>
            <person name="Xie G."/>
            <person name="Huang W."/>
            <person name="Hellsten U."/>
            <person name="Tran-Gyamfi M."/>
            <person name="She X."/>
            <person name="Prabhakar S."/>
            <person name="Aerts A."/>
            <person name="Altherr M."/>
            <person name="Bajorek E."/>
            <person name="Black S."/>
            <person name="Branscomb E."/>
            <person name="Caoile C."/>
            <person name="Challacombe J.F."/>
            <person name="Chan Y.M."/>
            <person name="Denys M."/>
            <person name="Detter J.C."/>
            <person name="Escobar J."/>
            <person name="Flowers D."/>
            <person name="Fotopulos D."/>
            <person name="Glavina T."/>
            <person name="Gomez M."/>
            <person name="Gonzales E."/>
            <person name="Goodstein D."/>
            <person name="Grigoriev I."/>
            <person name="Groza M."/>
            <person name="Hammon N."/>
            <person name="Hawkins T."/>
            <person name="Haydu L."/>
            <person name="Israni S."/>
            <person name="Jett J."/>
            <person name="Kadner K."/>
            <person name="Kimball H."/>
            <person name="Kobayashi A."/>
            <person name="Lopez F."/>
            <person name="Lou Y."/>
            <person name="Martinez D."/>
            <person name="Medina C."/>
            <person name="Morgan J."/>
            <person name="Nandkeshwar R."/>
            <person name="Noonan J.P."/>
            <person name="Pitluck S."/>
            <person name="Pollard M."/>
            <person name="Predki P."/>
            <person name="Priest J."/>
            <person name="Ramirez L."/>
            <person name="Retterer J."/>
            <person name="Rodriguez A."/>
            <person name="Rogers S."/>
            <person name="Salamov A."/>
            <person name="Salazar A."/>
            <person name="Thayer N."/>
            <person name="Tice H."/>
            <person name="Tsai M."/>
            <person name="Ustaszewska A."/>
            <person name="Vo N."/>
            <person name="Wheeler J."/>
            <person name="Wu K."/>
            <person name="Yang J."/>
            <person name="Dickson M."/>
            <person name="Cheng J.-F."/>
            <person name="Eichler E.E."/>
            <person name="Olsen A."/>
            <person name="Pennacchio L.A."/>
            <person name="Rokhsar D.S."/>
            <person name="Richardson P."/>
            <person name="Lucas S.M."/>
            <person name="Myers R.M."/>
            <person name="Rubin E.M."/>
        </authorList>
    </citation>
    <scope>NUCLEOTIDE SEQUENCE [LARGE SCALE GENOMIC DNA]</scope>
</reference>
<reference key="3">
    <citation type="submission" date="2005-07" db="EMBL/GenBank/DDBJ databases">
        <authorList>
            <person name="Mural R.J."/>
            <person name="Istrail S."/>
            <person name="Sutton G.G."/>
            <person name="Florea L."/>
            <person name="Halpern A.L."/>
            <person name="Mobarry C.M."/>
            <person name="Lippert R."/>
            <person name="Walenz B."/>
            <person name="Shatkay H."/>
            <person name="Dew I."/>
            <person name="Miller J.R."/>
            <person name="Flanigan M.J."/>
            <person name="Edwards N.J."/>
            <person name="Bolanos R."/>
            <person name="Fasulo D."/>
            <person name="Halldorsson B.V."/>
            <person name="Hannenhalli S."/>
            <person name="Turner R."/>
            <person name="Yooseph S."/>
            <person name="Lu F."/>
            <person name="Nusskern D.R."/>
            <person name="Shue B.C."/>
            <person name="Zheng X.H."/>
            <person name="Zhong F."/>
            <person name="Delcher A.L."/>
            <person name="Huson D.H."/>
            <person name="Kravitz S.A."/>
            <person name="Mouchard L."/>
            <person name="Reinert K."/>
            <person name="Remington K.A."/>
            <person name="Clark A.G."/>
            <person name="Waterman M.S."/>
            <person name="Eichler E.E."/>
            <person name="Adams M.D."/>
            <person name="Hunkapiller M.W."/>
            <person name="Myers E.W."/>
            <person name="Venter J.C."/>
        </authorList>
    </citation>
    <scope>NUCLEOTIDE SEQUENCE [LARGE SCALE GENOMIC DNA]</scope>
</reference>
<reference key="4">
    <citation type="journal article" date="2004" name="Genome Res.">
        <title>The status, quality, and expansion of the NIH full-length cDNA project: the Mammalian Gene Collection (MGC).</title>
        <authorList>
            <consortium name="The MGC Project Team"/>
        </authorList>
    </citation>
    <scope>NUCLEOTIDE SEQUENCE [LARGE SCALE MRNA] (ISOFORM 1)</scope>
    <source>
        <tissue>Placenta</tissue>
    </source>
</reference>
<reference key="5">
    <citation type="journal article" date="2009" name="Nat. Biotechnol.">
        <title>Mass-spectrometric identification and relative quantification of N-linked cell surface glycoproteins.</title>
        <authorList>
            <person name="Wollscheid B."/>
            <person name="Bausch-Fluck D."/>
            <person name="Henderson C."/>
            <person name="O'Brien R."/>
            <person name="Bibel M."/>
            <person name="Schiess R."/>
            <person name="Aebersold R."/>
            <person name="Watts J.D."/>
        </authorList>
    </citation>
    <scope>GLYCOSYLATION [LARGE SCALE ANALYSIS] AT ASN-213 AND ASN-218</scope>
    <source>
        <tissue>Leukemic T-cell</tissue>
    </source>
</reference>
<sequence>MRALPGLLEARARTPRLLLLQCLLAAARPSSADGSAPDSPFTSPPLREEIMANNFSLESHNISLTEHSSMPVEKNITLERPSNVNLTCQFTTSGDLNAVNVTWKKDGEQLENNYLVSATGSTLYTQYRFTIINSKQMGSYSCFFREEKEQRGTFNFKVPELHGKNKPLISYVGDSTVLTCKCQNCFPLNWTWYSSNGSVKVPVGVQMNKYVINGTYANETKLKITQLLEEDGESYWCRALFQLGESEEHIELVVLSYLVPLKPFLVIVAEVILLVATILLCEKYTQKKKKHSDEGKEFEQIEQLKSDDSNGIENNVPRHRKNESLGQ</sequence>
<name>EMB_HUMAN</name>
<protein>
    <recommendedName>
        <fullName>Embigin</fullName>
    </recommendedName>
</protein>
<feature type="signal peptide" evidence="3">
    <location>
        <begin position="1"/>
        <end position="32"/>
    </location>
</feature>
<feature type="chain" id="PRO_0000014749" description="Embigin">
    <location>
        <begin position="33"/>
        <end position="327"/>
    </location>
</feature>
<feature type="topological domain" description="Extracellular" evidence="3">
    <location>
        <begin position="33"/>
        <end position="260"/>
    </location>
</feature>
<feature type="transmembrane region" description="Helical" evidence="3">
    <location>
        <begin position="261"/>
        <end position="281"/>
    </location>
</feature>
<feature type="topological domain" description="Cytoplasmic" evidence="3">
    <location>
        <begin position="282"/>
        <end position="327"/>
    </location>
</feature>
<feature type="domain" description="Ig-like V-type 1">
    <location>
        <begin position="71"/>
        <end position="158"/>
    </location>
</feature>
<feature type="domain" description="Ig-like V-type 2">
    <location>
        <begin position="159"/>
        <end position="253"/>
    </location>
</feature>
<feature type="region of interest" description="Disordered" evidence="5">
    <location>
        <begin position="287"/>
        <end position="327"/>
    </location>
</feature>
<feature type="compositionally biased region" description="Basic and acidic residues" evidence="5">
    <location>
        <begin position="291"/>
        <end position="308"/>
    </location>
</feature>
<feature type="modified residue" description="Phosphoserine" evidence="1">
    <location>
        <position position="309"/>
    </location>
</feature>
<feature type="glycosylation site" description="N-linked (GlcNAc...) asparagine" evidence="3">
    <location>
        <position position="54"/>
    </location>
</feature>
<feature type="glycosylation site" description="N-linked (GlcNAc...) asparagine" evidence="3">
    <location>
        <position position="61"/>
    </location>
</feature>
<feature type="glycosylation site" description="N-linked (GlcNAc...) asparagine" evidence="3">
    <location>
        <position position="75"/>
    </location>
</feature>
<feature type="glycosylation site" description="N-linked (GlcNAc...) asparagine" evidence="3">
    <location>
        <position position="85"/>
    </location>
</feature>
<feature type="glycosylation site" description="N-linked (GlcNAc...) asparagine" evidence="3">
    <location>
        <position position="100"/>
    </location>
</feature>
<feature type="glycosylation site" description="N-linked (GlcNAc...) asparagine" evidence="3">
    <location>
        <position position="189"/>
    </location>
</feature>
<feature type="glycosylation site" description="N-linked (GlcNAc...) asparagine" evidence="3">
    <location>
        <position position="196"/>
    </location>
</feature>
<feature type="glycosylation site" description="N-linked (GlcNAc...) asparagine" evidence="6">
    <location>
        <position position="213"/>
    </location>
</feature>
<feature type="glycosylation site" description="N-linked (GlcNAc...) asparagine" evidence="6">
    <location>
        <position position="218"/>
    </location>
</feature>
<feature type="disulfide bond" evidence="4">
    <location>
        <begin position="88"/>
        <end position="142"/>
    </location>
</feature>
<feature type="disulfide bond" evidence="4">
    <location>
        <begin position="180"/>
        <end position="237"/>
    </location>
</feature>
<feature type="splice variant" id="VSP_055593" description="In isoform 2." evidence="7">
    <location>
        <begin position="1"/>
        <end position="50"/>
    </location>
</feature>
<accession>Q6PCB8</accession>
<accession>B7Z6S3</accession>
<accession>B7Z902</accession>
<organism>
    <name type="scientific">Homo sapiens</name>
    <name type="common">Human</name>
    <dbReference type="NCBI Taxonomy" id="9606"/>
    <lineage>
        <taxon>Eukaryota</taxon>
        <taxon>Metazoa</taxon>
        <taxon>Chordata</taxon>
        <taxon>Craniata</taxon>
        <taxon>Vertebrata</taxon>
        <taxon>Euteleostomi</taxon>
        <taxon>Mammalia</taxon>
        <taxon>Eutheria</taxon>
        <taxon>Euarchontoglires</taxon>
        <taxon>Primates</taxon>
        <taxon>Haplorrhini</taxon>
        <taxon>Catarrhini</taxon>
        <taxon>Hominidae</taxon>
        <taxon>Homo</taxon>
    </lineage>
</organism>
<evidence type="ECO:0000250" key="1">
    <source>
        <dbReference type="UniProtKB" id="O88775"/>
    </source>
</evidence>
<evidence type="ECO:0000250" key="2">
    <source>
        <dbReference type="UniProtKB" id="P21995"/>
    </source>
</evidence>
<evidence type="ECO:0000255" key="3"/>
<evidence type="ECO:0000255" key="4">
    <source>
        <dbReference type="PROSITE-ProRule" id="PRU00114"/>
    </source>
</evidence>
<evidence type="ECO:0000256" key="5">
    <source>
        <dbReference type="SAM" id="MobiDB-lite"/>
    </source>
</evidence>
<evidence type="ECO:0000269" key="6">
    <source>
    </source>
</evidence>
<evidence type="ECO:0000303" key="7">
    <source>
    </source>
</evidence>
<keyword id="KW-0002">3D-structure</keyword>
<keyword id="KW-0025">Alternative splicing</keyword>
<keyword id="KW-1003">Cell membrane</keyword>
<keyword id="KW-1015">Disulfide bond</keyword>
<keyword id="KW-0325">Glycoprotein</keyword>
<keyword id="KW-0393">Immunoglobulin domain</keyword>
<keyword id="KW-0472">Membrane</keyword>
<keyword id="KW-0597">Phosphoprotein</keyword>
<keyword id="KW-1267">Proteomics identification</keyword>
<keyword id="KW-1185">Reference proteome</keyword>
<keyword id="KW-0677">Repeat</keyword>
<keyword id="KW-0732">Signal</keyword>
<keyword id="KW-0770">Synapse</keyword>
<keyword id="KW-0812">Transmembrane</keyword>
<keyword id="KW-1133">Transmembrane helix</keyword>
<comment type="function">
    <text evidence="1">Plays a role in the outgrowth of motoneurons and in the formation of neuromuscular junctions. Following muscle denervation, promotes nerve terminal sprouting and the formation of additional acetylcholine receptor clusters at synaptic sites without affecting terminal Schwann cell number or morphology. Delays the retraction of terminal sprouts following re-innervation of denervated endplates. May play a role in targeting the monocarboxylate transporters SLC16A1, SLC16A6 and SLC16A7 to the cell membrane (By similarity).</text>
</comment>
<comment type="subunit">
    <text evidence="1">Interacts with SLC16A1, SLC16A6 and SLC16A7.</text>
</comment>
<comment type="interaction">
    <interactant intactId="EBI-21518272">
        <id>Q6PCB8</id>
    </interactant>
    <interactant intactId="EBI-719257">
        <id>Q9Y276</id>
        <label>BCS1L</label>
    </interactant>
    <organismsDiffer>false</organismsDiffer>
    <experiments>2</experiments>
</comment>
<comment type="subcellular location">
    <subcellularLocation>
        <location evidence="1">Cell membrane</location>
        <topology evidence="1">Single-pass type I membrane protein</topology>
    </subcellularLocation>
    <subcellularLocation>
        <location evidence="2">Synapse</location>
    </subcellularLocation>
    <text evidence="2">Localizes to the neuromuscular junctions.</text>
</comment>
<comment type="alternative products">
    <event type="alternative splicing"/>
    <isoform>
        <id>Q6PCB8-1</id>
        <name>1</name>
        <sequence type="displayed"/>
    </isoform>
    <isoform>
        <id>Q6PCB8-2</id>
        <name>2</name>
        <sequence type="described" ref="VSP_055593"/>
    </isoform>
</comment>
<proteinExistence type="evidence at protein level"/>
<dbReference type="EMBL" id="AK300860">
    <property type="protein sequence ID" value="BAH13359.1"/>
    <property type="molecule type" value="mRNA"/>
</dbReference>
<dbReference type="EMBL" id="AK304226">
    <property type="protein sequence ID" value="BAH14138.1"/>
    <property type="molecule type" value="mRNA"/>
</dbReference>
<dbReference type="EMBL" id="AC035145">
    <property type="status" value="NOT_ANNOTATED_CDS"/>
    <property type="molecule type" value="Genomic_DNA"/>
</dbReference>
<dbReference type="EMBL" id="AC091833">
    <property type="status" value="NOT_ANNOTATED_CDS"/>
    <property type="molecule type" value="Genomic_DNA"/>
</dbReference>
<dbReference type="EMBL" id="CH471123">
    <property type="protein sequence ID" value="EAW54853.1"/>
    <property type="molecule type" value="Genomic_DNA"/>
</dbReference>
<dbReference type="EMBL" id="CH471123">
    <property type="protein sequence ID" value="EAW54854.1"/>
    <property type="molecule type" value="Genomic_DNA"/>
</dbReference>
<dbReference type="EMBL" id="BC059398">
    <property type="protein sequence ID" value="AAH59398.1"/>
    <property type="molecule type" value="mRNA"/>
</dbReference>
<dbReference type="CCDS" id="CCDS3953.1">
    <molecule id="Q6PCB8-1"/>
</dbReference>
<dbReference type="RefSeq" id="NP_940851.1">
    <molecule id="Q6PCB8-1"/>
    <property type="nucleotide sequence ID" value="NM_198449.3"/>
</dbReference>
<dbReference type="RefSeq" id="XP_011541448.1">
    <molecule id="Q6PCB8-2"/>
    <property type="nucleotide sequence ID" value="XM_011543146.3"/>
</dbReference>
<dbReference type="RefSeq" id="XP_047272658.1">
    <molecule id="Q6PCB8-2"/>
    <property type="nucleotide sequence ID" value="XM_047416702.1"/>
</dbReference>
<dbReference type="RefSeq" id="XP_054207551.1">
    <molecule id="Q6PCB8-2"/>
    <property type="nucleotide sequence ID" value="XM_054351576.1"/>
</dbReference>
<dbReference type="PDB" id="7YR5">
    <property type="method" value="EM"/>
    <property type="resolution" value="3.63 A"/>
    <property type="chains" value="B=1-327"/>
</dbReference>
<dbReference type="PDBsum" id="7YR5"/>
<dbReference type="EMDB" id="EMD-34046"/>
<dbReference type="SMR" id="Q6PCB8"/>
<dbReference type="BioGRID" id="126358">
    <property type="interactions" value="37"/>
</dbReference>
<dbReference type="FunCoup" id="Q6PCB8">
    <property type="interactions" value="743"/>
</dbReference>
<dbReference type="IntAct" id="Q6PCB8">
    <property type="interactions" value="36"/>
</dbReference>
<dbReference type="STRING" id="9606.ENSP00000302289"/>
<dbReference type="TCDB" id="8.A.23.1.2">
    <property type="family name" value="the basigin (basigin) family"/>
</dbReference>
<dbReference type="GlyCosmos" id="Q6PCB8">
    <property type="glycosylation" value="9 sites, No reported glycans"/>
</dbReference>
<dbReference type="GlyGen" id="Q6PCB8">
    <property type="glycosylation" value="9 sites, 2 N-linked glycans (2 sites)"/>
</dbReference>
<dbReference type="iPTMnet" id="Q6PCB8"/>
<dbReference type="PhosphoSitePlus" id="Q6PCB8"/>
<dbReference type="SwissPalm" id="Q6PCB8"/>
<dbReference type="BioMuta" id="EMB"/>
<dbReference type="DMDM" id="83286878"/>
<dbReference type="jPOST" id="Q6PCB8"/>
<dbReference type="MassIVE" id="Q6PCB8"/>
<dbReference type="PaxDb" id="9606-ENSP00000302289"/>
<dbReference type="PeptideAtlas" id="Q6PCB8"/>
<dbReference type="ProteomicsDB" id="67061">
    <molecule id="Q6PCB8-1"/>
</dbReference>
<dbReference type="ProteomicsDB" id="6995"/>
<dbReference type="Pumba" id="Q6PCB8"/>
<dbReference type="Antibodypedia" id="2626">
    <property type="antibodies" value="192 antibodies from 29 providers"/>
</dbReference>
<dbReference type="DNASU" id="133418"/>
<dbReference type="Ensembl" id="ENST00000303221.10">
    <molecule id="Q6PCB8-1"/>
    <property type="protein sequence ID" value="ENSP00000302289.5"/>
    <property type="gene ID" value="ENSG00000170571.12"/>
</dbReference>
<dbReference type="Ensembl" id="ENST00000514111.1">
    <molecule id="Q6PCB8-2"/>
    <property type="protein sequence ID" value="ENSP00000426404.1"/>
    <property type="gene ID" value="ENSG00000170571.12"/>
</dbReference>
<dbReference type="GeneID" id="133418"/>
<dbReference type="KEGG" id="hsa:133418"/>
<dbReference type="MANE-Select" id="ENST00000303221.10">
    <property type="protein sequence ID" value="ENSP00000302289.5"/>
    <property type="RefSeq nucleotide sequence ID" value="NM_198449.3"/>
    <property type="RefSeq protein sequence ID" value="NP_940851.1"/>
</dbReference>
<dbReference type="UCSC" id="uc003jom.4">
    <molecule id="Q6PCB8-1"/>
    <property type="organism name" value="human"/>
</dbReference>
<dbReference type="AGR" id="HGNC:30465"/>
<dbReference type="CTD" id="133418"/>
<dbReference type="DisGeNET" id="133418"/>
<dbReference type="GeneCards" id="EMB"/>
<dbReference type="HGNC" id="HGNC:30465">
    <property type="gene designation" value="EMB"/>
</dbReference>
<dbReference type="HPA" id="ENSG00000170571">
    <property type="expression patterns" value="Tissue enhanced (bone)"/>
</dbReference>
<dbReference type="MIM" id="615669">
    <property type="type" value="gene"/>
</dbReference>
<dbReference type="neXtProt" id="NX_Q6PCB8"/>
<dbReference type="OpenTargets" id="ENSG00000170571"/>
<dbReference type="PharmGKB" id="PA134917460"/>
<dbReference type="VEuPathDB" id="HostDB:ENSG00000170571"/>
<dbReference type="eggNOG" id="ENOG502RYF2">
    <property type="taxonomic scope" value="Eukaryota"/>
</dbReference>
<dbReference type="GeneTree" id="ENSGT00940000158944"/>
<dbReference type="HOGENOM" id="CLU_065379_0_0_1"/>
<dbReference type="InParanoid" id="Q6PCB8"/>
<dbReference type="OMA" id="KGSYWCH"/>
<dbReference type="OrthoDB" id="9932757at2759"/>
<dbReference type="PAN-GO" id="Q6PCB8">
    <property type="GO annotations" value="6 GO annotations based on evolutionary models"/>
</dbReference>
<dbReference type="PhylomeDB" id="Q6PCB8"/>
<dbReference type="TreeFam" id="TF326759"/>
<dbReference type="PathwayCommons" id="Q6PCB8"/>
<dbReference type="Reactome" id="R-HSA-433692">
    <property type="pathway name" value="Proton-coupled monocarboxylate transport"/>
</dbReference>
<dbReference type="SignaLink" id="Q6PCB8"/>
<dbReference type="BioGRID-ORCS" id="133418">
    <property type="hits" value="12 hits in 1106 CRISPR screens"/>
</dbReference>
<dbReference type="ChiTaRS" id="EMB">
    <property type="organism name" value="human"/>
</dbReference>
<dbReference type="GenomeRNAi" id="133418"/>
<dbReference type="Pharos" id="Q6PCB8">
    <property type="development level" value="Tbio"/>
</dbReference>
<dbReference type="PRO" id="PR:Q6PCB8"/>
<dbReference type="Proteomes" id="UP000005640">
    <property type="component" value="Chromosome 5"/>
</dbReference>
<dbReference type="RNAct" id="Q6PCB8">
    <property type="molecule type" value="protein"/>
</dbReference>
<dbReference type="Bgee" id="ENSG00000170571">
    <property type="expression patterns" value="Expressed in bone marrow cell and 99 other cell types or tissues"/>
</dbReference>
<dbReference type="ExpressionAtlas" id="Q6PCB8">
    <property type="expression patterns" value="baseline and differential"/>
</dbReference>
<dbReference type="GO" id="GO:0030424">
    <property type="term" value="C:axon"/>
    <property type="evidence" value="ECO:0000318"/>
    <property type="project" value="GO_Central"/>
</dbReference>
<dbReference type="GO" id="GO:0005886">
    <property type="term" value="C:plasma membrane"/>
    <property type="evidence" value="ECO:0000250"/>
    <property type="project" value="UniProtKB"/>
</dbReference>
<dbReference type="GO" id="GO:0045202">
    <property type="term" value="C:synapse"/>
    <property type="evidence" value="ECO:0007669"/>
    <property type="project" value="UniProtKB-SubCell"/>
</dbReference>
<dbReference type="GO" id="GO:0098632">
    <property type="term" value="F:cell-cell adhesion mediator activity"/>
    <property type="evidence" value="ECO:0000318"/>
    <property type="project" value="GO_Central"/>
</dbReference>
<dbReference type="GO" id="GO:0007411">
    <property type="term" value="P:axon guidance"/>
    <property type="evidence" value="ECO:0000318"/>
    <property type="project" value="GO_Central"/>
</dbReference>
<dbReference type="GO" id="GO:0070593">
    <property type="term" value="P:dendrite self-avoidance"/>
    <property type="evidence" value="ECO:0000318"/>
    <property type="project" value="GO_Central"/>
</dbReference>
<dbReference type="GO" id="GO:0007156">
    <property type="term" value="P:homophilic cell adhesion via plasma membrane adhesion molecules"/>
    <property type="evidence" value="ECO:0000318"/>
    <property type="project" value="GO_Central"/>
</dbReference>
<dbReference type="GO" id="GO:0035879">
    <property type="term" value="P:plasma membrane lactate transport"/>
    <property type="evidence" value="ECO:0000250"/>
    <property type="project" value="UniProtKB"/>
</dbReference>
<dbReference type="CDD" id="cd00096">
    <property type="entry name" value="Ig"/>
    <property type="match status" value="1"/>
</dbReference>
<dbReference type="FunFam" id="2.60.40.10:FF:001012">
    <property type="entry name" value="Embigin"/>
    <property type="match status" value="1"/>
</dbReference>
<dbReference type="FunFam" id="2.60.40.10:FF:001288">
    <property type="entry name" value="Embigin"/>
    <property type="match status" value="1"/>
</dbReference>
<dbReference type="Gene3D" id="2.60.40.10">
    <property type="entry name" value="Immunoglobulins"/>
    <property type="match status" value="2"/>
</dbReference>
<dbReference type="InterPro" id="IPR007110">
    <property type="entry name" value="Ig-like_dom"/>
</dbReference>
<dbReference type="InterPro" id="IPR036179">
    <property type="entry name" value="Ig-like_dom_sf"/>
</dbReference>
<dbReference type="InterPro" id="IPR013783">
    <property type="entry name" value="Ig-like_fold"/>
</dbReference>
<dbReference type="InterPro" id="IPR013098">
    <property type="entry name" value="Ig_I-set"/>
</dbReference>
<dbReference type="InterPro" id="IPR003599">
    <property type="entry name" value="Ig_sub"/>
</dbReference>
<dbReference type="PANTHER" id="PTHR10075">
    <property type="entry name" value="BASIGIN RELATED"/>
    <property type="match status" value="1"/>
</dbReference>
<dbReference type="PANTHER" id="PTHR10075:SF4">
    <property type="entry name" value="EMBIGIN"/>
    <property type="match status" value="1"/>
</dbReference>
<dbReference type="Pfam" id="PF07679">
    <property type="entry name" value="I-set"/>
    <property type="match status" value="1"/>
</dbReference>
<dbReference type="SMART" id="SM00409">
    <property type="entry name" value="IG"/>
    <property type="match status" value="2"/>
</dbReference>
<dbReference type="SUPFAM" id="SSF48726">
    <property type="entry name" value="Immunoglobulin"/>
    <property type="match status" value="1"/>
</dbReference>
<dbReference type="PROSITE" id="PS50835">
    <property type="entry name" value="IG_LIKE"/>
    <property type="match status" value="2"/>
</dbReference>